<feature type="chain" id="PRO_0000325198" description="DNA repair protein RecO">
    <location>
        <begin position="1"/>
        <end position="256"/>
    </location>
</feature>
<dbReference type="EMBL" id="CP000382">
    <property type="protein sequence ID" value="ABK61542.1"/>
    <property type="molecule type" value="Genomic_DNA"/>
</dbReference>
<dbReference type="RefSeq" id="WP_011722544.1">
    <property type="nucleotide sequence ID" value="NC_008593.1"/>
</dbReference>
<dbReference type="SMR" id="A0Q1P9"/>
<dbReference type="STRING" id="386415.NT01CX_0042"/>
<dbReference type="KEGG" id="cno:NT01CX_0042"/>
<dbReference type="PATRIC" id="fig|386415.7.peg.1581"/>
<dbReference type="eggNOG" id="COG1381">
    <property type="taxonomic scope" value="Bacteria"/>
</dbReference>
<dbReference type="HOGENOM" id="CLU_066632_3_1_9"/>
<dbReference type="Proteomes" id="UP000008220">
    <property type="component" value="Chromosome"/>
</dbReference>
<dbReference type="GO" id="GO:0043590">
    <property type="term" value="C:bacterial nucleoid"/>
    <property type="evidence" value="ECO:0007669"/>
    <property type="project" value="TreeGrafter"/>
</dbReference>
<dbReference type="GO" id="GO:0006310">
    <property type="term" value="P:DNA recombination"/>
    <property type="evidence" value="ECO:0007669"/>
    <property type="project" value="UniProtKB-UniRule"/>
</dbReference>
<dbReference type="GO" id="GO:0006302">
    <property type="term" value="P:double-strand break repair"/>
    <property type="evidence" value="ECO:0007669"/>
    <property type="project" value="TreeGrafter"/>
</dbReference>
<dbReference type="Gene3D" id="2.40.50.140">
    <property type="entry name" value="Nucleic acid-binding proteins"/>
    <property type="match status" value="1"/>
</dbReference>
<dbReference type="Gene3D" id="1.20.1440.120">
    <property type="entry name" value="Recombination protein O, C-terminal domain"/>
    <property type="match status" value="1"/>
</dbReference>
<dbReference type="HAMAP" id="MF_00201">
    <property type="entry name" value="RecO"/>
    <property type="match status" value="1"/>
</dbReference>
<dbReference type="InterPro" id="IPR037278">
    <property type="entry name" value="ARFGAP/RecO"/>
</dbReference>
<dbReference type="InterPro" id="IPR022572">
    <property type="entry name" value="DNA_rep/recomb_RecO_N"/>
</dbReference>
<dbReference type="InterPro" id="IPR012340">
    <property type="entry name" value="NA-bd_OB-fold"/>
</dbReference>
<dbReference type="InterPro" id="IPR003717">
    <property type="entry name" value="RecO"/>
</dbReference>
<dbReference type="InterPro" id="IPR042242">
    <property type="entry name" value="RecO_C"/>
</dbReference>
<dbReference type="NCBIfam" id="TIGR00613">
    <property type="entry name" value="reco"/>
    <property type="match status" value="1"/>
</dbReference>
<dbReference type="PANTHER" id="PTHR33991">
    <property type="entry name" value="DNA REPAIR PROTEIN RECO"/>
    <property type="match status" value="1"/>
</dbReference>
<dbReference type="PANTHER" id="PTHR33991:SF1">
    <property type="entry name" value="DNA REPAIR PROTEIN RECO"/>
    <property type="match status" value="1"/>
</dbReference>
<dbReference type="Pfam" id="PF02565">
    <property type="entry name" value="RecO_C"/>
    <property type="match status" value="1"/>
</dbReference>
<dbReference type="Pfam" id="PF11967">
    <property type="entry name" value="RecO_N"/>
    <property type="match status" value="1"/>
</dbReference>
<dbReference type="SUPFAM" id="SSF57863">
    <property type="entry name" value="ArfGap/RecO-like zinc finger"/>
    <property type="match status" value="1"/>
</dbReference>
<dbReference type="SUPFAM" id="SSF50249">
    <property type="entry name" value="Nucleic acid-binding proteins"/>
    <property type="match status" value="1"/>
</dbReference>
<accession>A0Q1P9</accession>
<sequence>MGDGFLSIFKTKALILKTQDYKENDKLVWLFTEKIGKVCAIAKGAKKSKSKFIASTQTFCFGEYVLYRGKSLYSINEVEIIDSFQSLLSDMDTITYGSYFCELILIALEQEQSDRELFKDFIKSFYFLKNQAMDLEILARTFELKLLKATGYGFDFEKCCICGKRINKTNYLSIQYYGGVCDNCEKTGGFKISYAAYGVLKFLYKTSIENAHIISVSNEIKEEVYKVLDMFISQSYSKKPKSLEIFNYLKRSEYNE</sequence>
<name>RECO_CLONN</name>
<protein>
    <recommendedName>
        <fullName evidence="1">DNA repair protein RecO</fullName>
    </recommendedName>
    <alternativeName>
        <fullName evidence="1">Recombination protein O</fullName>
    </alternativeName>
</protein>
<comment type="function">
    <text evidence="1">Involved in DNA repair and RecF pathway recombination.</text>
</comment>
<comment type="similarity">
    <text evidence="1">Belongs to the RecO family.</text>
</comment>
<gene>
    <name evidence="1" type="primary">recO</name>
    <name type="ordered locus">NT01CX_0042</name>
</gene>
<organism>
    <name type="scientific">Clostridium novyi (strain NT)</name>
    <dbReference type="NCBI Taxonomy" id="386415"/>
    <lineage>
        <taxon>Bacteria</taxon>
        <taxon>Bacillati</taxon>
        <taxon>Bacillota</taxon>
        <taxon>Clostridia</taxon>
        <taxon>Eubacteriales</taxon>
        <taxon>Clostridiaceae</taxon>
        <taxon>Clostridium</taxon>
    </lineage>
</organism>
<reference key="1">
    <citation type="journal article" date="2006" name="Nat. Biotechnol.">
        <title>The genome and transcriptomes of the anti-tumor agent Clostridium novyi-NT.</title>
        <authorList>
            <person name="Bettegowda C."/>
            <person name="Huang X."/>
            <person name="Lin J."/>
            <person name="Cheong I."/>
            <person name="Kohli M."/>
            <person name="Szabo S.A."/>
            <person name="Zhang X."/>
            <person name="Diaz L.A. Jr."/>
            <person name="Velculescu V.E."/>
            <person name="Parmigiani G."/>
            <person name="Kinzler K.W."/>
            <person name="Vogelstein B."/>
            <person name="Zhou S."/>
        </authorList>
    </citation>
    <scope>NUCLEOTIDE SEQUENCE [LARGE SCALE GENOMIC DNA]</scope>
    <source>
        <strain>NT</strain>
    </source>
</reference>
<proteinExistence type="inferred from homology"/>
<evidence type="ECO:0000255" key="1">
    <source>
        <dbReference type="HAMAP-Rule" id="MF_00201"/>
    </source>
</evidence>
<keyword id="KW-0227">DNA damage</keyword>
<keyword id="KW-0233">DNA recombination</keyword>
<keyword id="KW-0234">DNA repair</keyword>
<keyword id="KW-1185">Reference proteome</keyword>